<dbReference type="EMBL" id="BA000018">
    <property type="protein sequence ID" value="BAB41674.1"/>
    <property type="status" value="ALT_INIT"/>
    <property type="molecule type" value="Genomic_DNA"/>
</dbReference>
<dbReference type="PIR" id="G89814">
    <property type="entry name" value="G89814"/>
</dbReference>
<dbReference type="RefSeq" id="WP_000375683.1">
    <property type="nucleotide sequence ID" value="NC_002745.2"/>
</dbReference>
<dbReference type="SMR" id="Q7A7C3"/>
<dbReference type="EnsemblBacteria" id="BAB41674">
    <property type="protein sequence ID" value="BAB41674"/>
    <property type="gene ID" value="BAB41674"/>
</dbReference>
<dbReference type="KEGG" id="sau:SA0444"/>
<dbReference type="HOGENOM" id="CLU_157169_0_0_9"/>
<dbReference type="GO" id="GO:0009295">
    <property type="term" value="C:nucleoid"/>
    <property type="evidence" value="ECO:0007669"/>
    <property type="project" value="UniProtKB-SubCell"/>
</dbReference>
<dbReference type="GO" id="GO:0006260">
    <property type="term" value="P:DNA replication"/>
    <property type="evidence" value="ECO:0007669"/>
    <property type="project" value="UniProtKB-UniRule"/>
</dbReference>
<dbReference type="HAMAP" id="MF_01159">
    <property type="entry name" value="YabA"/>
    <property type="match status" value="1"/>
</dbReference>
<dbReference type="InterPro" id="IPR010377">
    <property type="entry name" value="YabA"/>
</dbReference>
<dbReference type="NCBIfam" id="NF009641">
    <property type="entry name" value="PRK13169.1-2"/>
    <property type="match status" value="1"/>
</dbReference>
<dbReference type="Pfam" id="PF06156">
    <property type="entry name" value="YabA"/>
    <property type="match status" value="1"/>
</dbReference>
<dbReference type="PIRSF" id="PIRSF021439">
    <property type="entry name" value="DUF972"/>
    <property type="match status" value="1"/>
</dbReference>
<organism>
    <name type="scientific">Staphylococcus aureus (strain N315)</name>
    <dbReference type="NCBI Taxonomy" id="158879"/>
    <lineage>
        <taxon>Bacteria</taxon>
        <taxon>Bacillati</taxon>
        <taxon>Bacillota</taxon>
        <taxon>Bacilli</taxon>
        <taxon>Bacillales</taxon>
        <taxon>Staphylococcaceae</taxon>
        <taxon>Staphylococcus</taxon>
    </lineage>
</organism>
<gene>
    <name evidence="1" type="primary">yabA</name>
    <name type="ordered locus">SA0444</name>
</gene>
<feature type="chain" id="PRO_0000211917" description="Replication initiation control protein YabA">
    <location>
        <begin position="1"/>
        <end position="115"/>
    </location>
</feature>
<feature type="binding site" evidence="1">
    <location>
        <position position="90"/>
    </location>
    <ligand>
        <name>Zn(2+)</name>
        <dbReference type="ChEBI" id="CHEBI:29105"/>
    </ligand>
</feature>
<feature type="binding site" evidence="1">
    <location>
        <position position="92"/>
    </location>
    <ligand>
        <name>Zn(2+)</name>
        <dbReference type="ChEBI" id="CHEBI:29105"/>
    </ligand>
</feature>
<feature type="binding site" evidence="1">
    <location>
        <position position="106"/>
    </location>
    <ligand>
        <name>Zn(2+)</name>
        <dbReference type="ChEBI" id="CHEBI:29105"/>
    </ligand>
</feature>
<feature type="binding site" evidence="1">
    <location>
        <position position="109"/>
    </location>
    <ligand>
        <name>Zn(2+)</name>
        <dbReference type="ChEBI" id="CHEBI:29105"/>
    </ligand>
</feature>
<comment type="function">
    <text evidence="1">Involved in control of chromosome replication initiation. Inhibits the cooperative binding of DnaA to the oriC region, thus negatively regulating initiation of chromosome replication. Inhibits the ability of DnaA-ATP to form a helix on DNA; does not disassemble preformed DnaA-DNA helices. Decreases the residence time of DnaA on the chromosome at its binding sites (oriC, replication forks and promoter-binding sites). Tethers DnaA to the replication machinery via the DNA polymerase beta sliding clamp subunit (dnaN). Associates with oriC and other DnaA targets on the chromosome in a DnaA-dependent manner.</text>
</comment>
<comment type="cofactor">
    <cofactor evidence="1">
        <name>Zn(2+)</name>
        <dbReference type="ChEBI" id="CHEBI:29105"/>
    </cofactor>
    <text evidence="1">Binds 1 zinc ion per subunit.</text>
</comment>
<comment type="subunit">
    <text evidence="1">Homotetramer. Interacts with both DnaA and DnaN, acting as a bridge between these two proteins.</text>
</comment>
<comment type="subcellular location">
    <subcellularLocation>
        <location evidence="1">Cytoplasm</location>
        <location evidence="1">Nucleoid</location>
    </subcellularLocation>
    <text evidence="1">Localizes in tight foci, which correspond to the replisome at mid-cell throughout the cell cycle.</text>
</comment>
<comment type="similarity">
    <text evidence="1">Belongs to the YabA family.</text>
</comment>
<comment type="sequence caution" evidence="2">
    <conflict type="erroneous initiation">
        <sequence resource="EMBL-CDS" id="BAB41674"/>
    </conflict>
</comment>
<keyword id="KW-0963">Cytoplasm</keyword>
<keyword id="KW-0235">DNA replication</keyword>
<keyword id="KW-0236">DNA replication inhibitor</keyword>
<keyword id="KW-0479">Metal-binding</keyword>
<keyword id="KW-0862">Zinc</keyword>
<protein>
    <recommendedName>
        <fullName evidence="1">Replication initiation control protein YabA</fullName>
    </recommendedName>
</protein>
<sequence>MDRNEIFEKIMRLEMNVNQLSKETSELKAHAVELVEENVALQLENDNLKKVLGNDEPTTIDTANSKPAKAVKKPLPSKDNLAILYGEGFHICKGELFGKHRHGEDCLFCLEVLSD</sequence>
<name>YABA_STAAN</name>
<reference key="1">
    <citation type="journal article" date="2001" name="Lancet">
        <title>Whole genome sequencing of meticillin-resistant Staphylococcus aureus.</title>
        <authorList>
            <person name="Kuroda M."/>
            <person name="Ohta T."/>
            <person name="Uchiyama I."/>
            <person name="Baba T."/>
            <person name="Yuzawa H."/>
            <person name="Kobayashi I."/>
            <person name="Cui L."/>
            <person name="Oguchi A."/>
            <person name="Aoki K."/>
            <person name="Nagai Y."/>
            <person name="Lian J.-Q."/>
            <person name="Ito T."/>
            <person name="Kanamori M."/>
            <person name="Matsumaru H."/>
            <person name="Maruyama A."/>
            <person name="Murakami H."/>
            <person name="Hosoyama A."/>
            <person name="Mizutani-Ui Y."/>
            <person name="Takahashi N.K."/>
            <person name="Sawano T."/>
            <person name="Inoue R."/>
            <person name="Kaito C."/>
            <person name="Sekimizu K."/>
            <person name="Hirakawa H."/>
            <person name="Kuhara S."/>
            <person name="Goto S."/>
            <person name="Yabuzaki J."/>
            <person name="Kanehisa M."/>
            <person name="Yamashita A."/>
            <person name="Oshima K."/>
            <person name="Furuya K."/>
            <person name="Yoshino C."/>
            <person name="Shiba T."/>
            <person name="Hattori M."/>
            <person name="Ogasawara N."/>
            <person name="Hayashi H."/>
            <person name="Hiramatsu K."/>
        </authorList>
    </citation>
    <scope>NUCLEOTIDE SEQUENCE [LARGE SCALE GENOMIC DNA]</scope>
    <source>
        <strain>N315</strain>
    </source>
</reference>
<accession>Q7A7C3</accession>
<proteinExistence type="inferred from homology"/>
<evidence type="ECO:0000255" key="1">
    <source>
        <dbReference type="HAMAP-Rule" id="MF_01159"/>
    </source>
</evidence>
<evidence type="ECO:0000305" key="2"/>